<sequence length="432" mass="47150">MGNNVVVLGTQWGDEGKGKIVDLLTERAKYVVRYQGGHNAGHTLVINGEKTVLHLIPSGILRDNVTSIIGNGVVLSPAALMKEMKGLEDRGIPVRERLLLSEACPLILDYHVALDVAREKARGAKAIGTTGRGIGPAYEDKVARRGLRVGDLFDKATFADKLKEVMEYHNFQLVNFYKADAVDYQKVLDDVMAVADILTGMVVDVSDLLDQARKRGDFVMFEGAQGTLLDIDHGTYPYVTSSNTTAGGVATGSGLGPRYVDYVLGIIKAYSTRVGAGPFPTELFDDIGEFLCKQGNEFGATTGRRRRTGWLDVVAVRRAVQINSLSGFCLTKLDVLDGLKEVKLCIGYRMPDGREVTTTPLAADDWEGIEPIYETMPGWSETTFGVKARSGLPQAALDYIKRIEELTEVPIDIISTGPDRSETMILRDPFDA</sequence>
<dbReference type="EC" id="6.3.4.4" evidence="1"/>
<dbReference type="EMBL" id="CP000653">
    <property type="protein sequence ID" value="ABP59048.1"/>
    <property type="molecule type" value="Genomic_DNA"/>
</dbReference>
<dbReference type="RefSeq" id="WP_011915621.1">
    <property type="nucleotide sequence ID" value="NC_009436.1"/>
</dbReference>
<dbReference type="SMR" id="A4W5R8"/>
<dbReference type="STRING" id="399742.Ent638_0360"/>
<dbReference type="KEGG" id="ent:Ent638_0360"/>
<dbReference type="eggNOG" id="COG0104">
    <property type="taxonomic scope" value="Bacteria"/>
</dbReference>
<dbReference type="HOGENOM" id="CLU_029848_0_0_6"/>
<dbReference type="OrthoDB" id="9807553at2"/>
<dbReference type="UniPathway" id="UPA00075">
    <property type="reaction ID" value="UER00335"/>
</dbReference>
<dbReference type="Proteomes" id="UP000000230">
    <property type="component" value="Chromosome"/>
</dbReference>
<dbReference type="GO" id="GO:0005737">
    <property type="term" value="C:cytoplasm"/>
    <property type="evidence" value="ECO:0007669"/>
    <property type="project" value="UniProtKB-SubCell"/>
</dbReference>
<dbReference type="GO" id="GO:0004019">
    <property type="term" value="F:adenylosuccinate synthase activity"/>
    <property type="evidence" value="ECO:0007669"/>
    <property type="project" value="UniProtKB-UniRule"/>
</dbReference>
<dbReference type="GO" id="GO:0005525">
    <property type="term" value="F:GTP binding"/>
    <property type="evidence" value="ECO:0007669"/>
    <property type="project" value="UniProtKB-UniRule"/>
</dbReference>
<dbReference type="GO" id="GO:0000287">
    <property type="term" value="F:magnesium ion binding"/>
    <property type="evidence" value="ECO:0007669"/>
    <property type="project" value="UniProtKB-UniRule"/>
</dbReference>
<dbReference type="GO" id="GO:0044208">
    <property type="term" value="P:'de novo' AMP biosynthetic process"/>
    <property type="evidence" value="ECO:0007669"/>
    <property type="project" value="UniProtKB-UniRule"/>
</dbReference>
<dbReference type="GO" id="GO:0046040">
    <property type="term" value="P:IMP metabolic process"/>
    <property type="evidence" value="ECO:0007669"/>
    <property type="project" value="TreeGrafter"/>
</dbReference>
<dbReference type="CDD" id="cd03108">
    <property type="entry name" value="AdSS"/>
    <property type="match status" value="1"/>
</dbReference>
<dbReference type="FunFam" id="1.10.300.10:FF:000001">
    <property type="entry name" value="Adenylosuccinate synthetase"/>
    <property type="match status" value="1"/>
</dbReference>
<dbReference type="FunFam" id="3.90.170.10:FF:000001">
    <property type="entry name" value="Adenylosuccinate synthetase"/>
    <property type="match status" value="1"/>
</dbReference>
<dbReference type="Gene3D" id="3.40.440.10">
    <property type="entry name" value="Adenylosuccinate Synthetase, subunit A, domain 1"/>
    <property type="match status" value="1"/>
</dbReference>
<dbReference type="Gene3D" id="1.10.300.10">
    <property type="entry name" value="Adenylosuccinate Synthetase, subunit A, domain 2"/>
    <property type="match status" value="1"/>
</dbReference>
<dbReference type="Gene3D" id="3.90.170.10">
    <property type="entry name" value="Adenylosuccinate Synthetase, subunit A, domain 3"/>
    <property type="match status" value="1"/>
</dbReference>
<dbReference type="HAMAP" id="MF_00011">
    <property type="entry name" value="Adenylosucc_synth"/>
    <property type="match status" value="1"/>
</dbReference>
<dbReference type="InterPro" id="IPR018220">
    <property type="entry name" value="Adenylosuccin_syn_GTP-bd"/>
</dbReference>
<dbReference type="InterPro" id="IPR033128">
    <property type="entry name" value="Adenylosuccin_syn_Lys_AS"/>
</dbReference>
<dbReference type="InterPro" id="IPR042109">
    <property type="entry name" value="Adenylosuccinate_synth_dom1"/>
</dbReference>
<dbReference type="InterPro" id="IPR042110">
    <property type="entry name" value="Adenylosuccinate_synth_dom2"/>
</dbReference>
<dbReference type="InterPro" id="IPR042111">
    <property type="entry name" value="Adenylosuccinate_synth_dom3"/>
</dbReference>
<dbReference type="InterPro" id="IPR001114">
    <property type="entry name" value="Adenylosuccinate_synthetase"/>
</dbReference>
<dbReference type="InterPro" id="IPR027417">
    <property type="entry name" value="P-loop_NTPase"/>
</dbReference>
<dbReference type="NCBIfam" id="NF002223">
    <property type="entry name" value="PRK01117.1"/>
    <property type="match status" value="1"/>
</dbReference>
<dbReference type="NCBIfam" id="TIGR00184">
    <property type="entry name" value="purA"/>
    <property type="match status" value="1"/>
</dbReference>
<dbReference type="PANTHER" id="PTHR11846">
    <property type="entry name" value="ADENYLOSUCCINATE SYNTHETASE"/>
    <property type="match status" value="1"/>
</dbReference>
<dbReference type="PANTHER" id="PTHR11846:SF0">
    <property type="entry name" value="ADENYLOSUCCINATE SYNTHETASE"/>
    <property type="match status" value="1"/>
</dbReference>
<dbReference type="Pfam" id="PF00709">
    <property type="entry name" value="Adenylsucc_synt"/>
    <property type="match status" value="1"/>
</dbReference>
<dbReference type="SMART" id="SM00788">
    <property type="entry name" value="Adenylsucc_synt"/>
    <property type="match status" value="1"/>
</dbReference>
<dbReference type="SUPFAM" id="SSF52540">
    <property type="entry name" value="P-loop containing nucleoside triphosphate hydrolases"/>
    <property type="match status" value="1"/>
</dbReference>
<dbReference type="PROSITE" id="PS01266">
    <property type="entry name" value="ADENYLOSUCCIN_SYN_1"/>
    <property type="match status" value="1"/>
</dbReference>
<dbReference type="PROSITE" id="PS00513">
    <property type="entry name" value="ADENYLOSUCCIN_SYN_2"/>
    <property type="match status" value="1"/>
</dbReference>
<protein>
    <recommendedName>
        <fullName evidence="1">Adenylosuccinate synthetase</fullName>
        <shortName evidence="1">AMPSase</shortName>
        <shortName evidence="1">AdSS</shortName>
        <ecNumber evidence="1">6.3.4.4</ecNumber>
    </recommendedName>
    <alternativeName>
        <fullName evidence="1">IMP--aspartate ligase</fullName>
    </alternativeName>
</protein>
<comment type="function">
    <text evidence="1">Plays an important role in the de novo pathway of purine nucleotide biosynthesis. Catalyzes the first committed step in the biosynthesis of AMP from IMP.</text>
</comment>
<comment type="catalytic activity">
    <reaction evidence="1">
        <text>IMP + L-aspartate + GTP = N(6)-(1,2-dicarboxyethyl)-AMP + GDP + phosphate + 2 H(+)</text>
        <dbReference type="Rhea" id="RHEA:15753"/>
        <dbReference type="ChEBI" id="CHEBI:15378"/>
        <dbReference type="ChEBI" id="CHEBI:29991"/>
        <dbReference type="ChEBI" id="CHEBI:37565"/>
        <dbReference type="ChEBI" id="CHEBI:43474"/>
        <dbReference type="ChEBI" id="CHEBI:57567"/>
        <dbReference type="ChEBI" id="CHEBI:58053"/>
        <dbReference type="ChEBI" id="CHEBI:58189"/>
        <dbReference type="EC" id="6.3.4.4"/>
    </reaction>
</comment>
<comment type="cofactor">
    <cofactor evidence="1">
        <name>Mg(2+)</name>
        <dbReference type="ChEBI" id="CHEBI:18420"/>
    </cofactor>
    <text evidence="1">Binds 1 Mg(2+) ion per subunit.</text>
</comment>
<comment type="pathway">
    <text evidence="1">Purine metabolism; AMP biosynthesis via de novo pathway; AMP from IMP: step 1/2.</text>
</comment>
<comment type="subunit">
    <text evidence="1">Homodimer.</text>
</comment>
<comment type="subcellular location">
    <subcellularLocation>
        <location evidence="1">Cytoplasm</location>
    </subcellularLocation>
</comment>
<comment type="similarity">
    <text evidence="1">Belongs to the adenylosuccinate synthetase family.</text>
</comment>
<feature type="chain" id="PRO_1000057089" description="Adenylosuccinate synthetase">
    <location>
        <begin position="1"/>
        <end position="432"/>
    </location>
</feature>
<feature type="active site" description="Proton acceptor" evidence="1">
    <location>
        <position position="14"/>
    </location>
</feature>
<feature type="active site" description="Proton donor" evidence="1">
    <location>
        <position position="42"/>
    </location>
</feature>
<feature type="binding site" evidence="1">
    <location>
        <begin position="13"/>
        <end position="19"/>
    </location>
    <ligand>
        <name>GTP</name>
        <dbReference type="ChEBI" id="CHEBI:37565"/>
    </ligand>
</feature>
<feature type="binding site" description="in other chain" evidence="1">
    <location>
        <begin position="14"/>
        <end position="17"/>
    </location>
    <ligand>
        <name>IMP</name>
        <dbReference type="ChEBI" id="CHEBI:58053"/>
        <note>ligand shared between dimeric partners</note>
    </ligand>
</feature>
<feature type="binding site" evidence="1">
    <location>
        <position position="14"/>
    </location>
    <ligand>
        <name>Mg(2+)</name>
        <dbReference type="ChEBI" id="CHEBI:18420"/>
    </ligand>
</feature>
<feature type="binding site" description="in other chain" evidence="1">
    <location>
        <begin position="39"/>
        <end position="42"/>
    </location>
    <ligand>
        <name>IMP</name>
        <dbReference type="ChEBI" id="CHEBI:58053"/>
        <note>ligand shared between dimeric partners</note>
    </ligand>
</feature>
<feature type="binding site" evidence="1">
    <location>
        <begin position="41"/>
        <end position="43"/>
    </location>
    <ligand>
        <name>GTP</name>
        <dbReference type="ChEBI" id="CHEBI:37565"/>
    </ligand>
</feature>
<feature type="binding site" evidence="1">
    <location>
        <position position="41"/>
    </location>
    <ligand>
        <name>Mg(2+)</name>
        <dbReference type="ChEBI" id="CHEBI:18420"/>
    </ligand>
</feature>
<feature type="binding site" description="in other chain" evidence="1">
    <location>
        <position position="130"/>
    </location>
    <ligand>
        <name>IMP</name>
        <dbReference type="ChEBI" id="CHEBI:58053"/>
        <note>ligand shared between dimeric partners</note>
    </ligand>
</feature>
<feature type="binding site" evidence="1">
    <location>
        <position position="144"/>
    </location>
    <ligand>
        <name>IMP</name>
        <dbReference type="ChEBI" id="CHEBI:58053"/>
        <note>ligand shared between dimeric partners</note>
    </ligand>
</feature>
<feature type="binding site" description="in other chain" evidence="1">
    <location>
        <position position="225"/>
    </location>
    <ligand>
        <name>IMP</name>
        <dbReference type="ChEBI" id="CHEBI:58053"/>
        <note>ligand shared between dimeric partners</note>
    </ligand>
</feature>
<feature type="binding site" description="in other chain" evidence="1">
    <location>
        <position position="240"/>
    </location>
    <ligand>
        <name>IMP</name>
        <dbReference type="ChEBI" id="CHEBI:58053"/>
        <note>ligand shared between dimeric partners</note>
    </ligand>
</feature>
<feature type="binding site" evidence="1">
    <location>
        <begin position="300"/>
        <end position="306"/>
    </location>
    <ligand>
        <name>substrate</name>
    </ligand>
</feature>
<feature type="binding site" description="in other chain" evidence="1">
    <location>
        <position position="304"/>
    </location>
    <ligand>
        <name>IMP</name>
        <dbReference type="ChEBI" id="CHEBI:58053"/>
        <note>ligand shared between dimeric partners</note>
    </ligand>
</feature>
<feature type="binding site" evidence="1">
    <location>
        <position position="306"/>
    </location>
    <ligand>
        <name>GTP</name>
        <dbReference type="ChEBI" id="CHEBI:37565"/>
    </ligand>
</feature>
<feature type="binding site" evidence="1">
    <location>
        <begin position="332"/>
        <end position="334"/>
    </location>
    <ligand>
        <name>GTP</name>
        <dbReference type="ChEBI" id="CHEBI:37565"/>
    </ligand>
</feature>
<feature type="binding site" evidence="1">
    <location>
        <begin position="415"/>
        <end position="417"/>
    </location>
    <ligand>
        <name>GTP</name>
        <dbReference type="ChEBI" id="CHEBI:37565"/>
    </ligand>
</feature>
<gene>
    <name evidence="1" type="primary">purA</name>
    <name type="ordered locus">Ent638_0360</name>
</gene>
<name>PURA_ENT38</name>
<accession>A4W5R8</accession>
<keyword id="KW-0963">Cytoplasm</keyword>
<keyword id="KW-0342">GTP-binding</keyword>
<keyword id="KW-0436">Ligase</keyword>
<keyword id="KW-0460">Magnesium</keyword>
<keyword id="KW-0479">Metal-binding</keyword>
<keyword id="KW-0547">Nucleotide-binding</keyword>
<keyword id="KW-0658">Purine biosynthesis</keyword>
<evidence type="ECO:0000255" key="1">
    <source>
        <dbReference type="HAMAP-Rule" id="MF_00011"/>
    </source>
</evidence>
<proteinExistence type="inferred from homology"/>
<reference key="1">
    <citation type="journal article" date="2010" name="PLoS Genet.">
        <title>Genome sequence of the plant growth promoting endophytic bacterium Enterobacter sp. 638.</title>
        <authorList>
            <person name="Taghavi S."/>
            <person name="van der Lelie D."/>
            <person name="Hoffman A."/>
            <person name="Zhang Y.B."/>
            <person name="Walla M.D."/>
            <person name="Vangronsveld J."/>
            <person name="Newman L."/>
            <person name="Monchy S."/>
        </authorList>
    </citation>
    <scope>NUCLEOTIDE SEQUENCE [LARGE SCALE GENOMIC DNA]</scope>
    <source>
        <strain>638</strain>
    </source>
</reference>
<organism>
    <name type="scientific">Enterobacter sp. (strain 638)</name>
    <dbReference type="NCBI Taxonomy" id="399742"/>
    <lineage>
        <taxon>Bacteria</taxon>
        <taxon>Pseudomonadati</taxon>
        <taxon>Pseudomonadota</taxon>
        <taxon>Gammaproteobacteria</taxon>
        <taxon>Enterobacterales</taxon>
        <taxon>Enterobacteriaceae</taxon>
        <taxon>Enterobacter</taxon>
    </lineage>
</organism>